<name>HEMH_AROAE</name>
<dbReference type="EC" id="4.98.1.1" evidence="1"/>
<dbReference type="EMBL" id="CR555306">
    <property type="protein sequence ID" value="CAI08843.1"/>
    <property type="molecule type" value="Genomic_DNA"/>
</dbReference>
<dbReference type="RefSeq" id="WP_011238526.1">
    <property type="nucleotide sequence ID" value="NC_006513.1"/>
</dbReference>
<dbReference type="SMR" id="Q5P1H1"/>
<dbReference type="STRING" id="76114.ebA4802"/>
<dbReference type="KEGG" id="eba:ebA4802"/>
<dbReference type="eggNOG" id="COG0276">
    <property type="taxonomic scope" value="Bacteria"/>
</dbReference>
<dbReference type="HOGENOM" id="CLU_018884_0_0_4"/>
<dbReference type="OrthoDB" id="9809741at2"/>
<dbReference type="UniPathway" id="UPA00252">
    <property type="reaction ID" value="UER00325"/>
</dbReference>
<dbReference type="Proteomes" id="UP000006552">
    <property type="component" value="Chromosome"/>
</dbReference>
<dbReference type="GO" id="GO:0005737">
    <property type="term" value="C:cytoplasm"/>
    <property type="evidence" value="ECO:0007669"/>
    <property type="project" value="UniProtKB-SubCell"/>
</dbReference>
<dbReference type="GO" id="GO:0004325">
    <property type="term" value="F:ferrochelatase activity"/>
    <property type="evidence" value="ECO:0007669"/>
    <property type="project" value="UniProtKB-UniRule"/>
</dbReference>
<dbReference type="GO" id="GO:0046872">
    <property type="term" value="F:metal ion binding"/>
    <property type="evidence" value="ECO:0007669"/>
    <property type="project" value="UniProtKB-KW"/>
</dbReference>
<dbReference type="GO" id="GO:0006783">
    <property type="term" value="P:heme biosynthetic process"/>
    <property type="evidence" value="ECO:0007669"/>
    <property type="project" value="UniProtKB-UniRule"/>
</dbReference>
<dbReference type="CDD" id="cd00419">
    <property type="entry name" value="Ferrochelatase_C"/>
    <property type="match status" value="1"/>
</dbReference>
<dbReference type="CDD" id="cd03411">
    <property type="entry name" value="Ferrochelatase_N"/>
    <property type="match status" value="1"/>
</dbReference>
<dbReference type="FunFam" id="3.40.50.1400:FF:000002">
    <property type="entry name" value="Ferrochelatase"/>
    <property type="match status" value="1"/>
</dbReference>
<dbReference type="Gene3D" id="3.40.50.1400">
    <property type="match status" value="2"/>
</dbReference>
<dbReference type="HAMAP" id="MF_00323">
    <property type="entry name" value="Ferrochelatase"/>
    <property type="match status" value="1"/>
</dbReference>
<dbReference type="InterPro" id="IPR001015">
    <property type="entry name" value="Ferrochelatase"/>
</dbReference>
<dbReference type="InterPro" id="IPR019772">
    <property type="entry name" value="Ferrochelatase_AS"/>
</dbReference>
<dbReference type="InterPro" id="IPR033644">
    <property type="entry name" value="Ferrochelatase_C"/>
</dbReference>
<dbReference type="InterPro" id="IPR033659">
    <property type="entry name" value="Ferrochelatase_N"/>
</dbReference>
<dbReference type="NCBIfam" id="TIGR00109">
    <property type="entry name" value="hemH"/>
    <property type="match status" value="1"/>
</dbReference>
<dbReference type="PANTHER" id="PTHR11108">
    <property type="entry name" value="FERROCHELATASE"/>
    <property type="match status" value="1"/>
</dbReference>
<dbReference type="PANTHER" id="PTHR11108:SF1">
    <property type="entry name" value="FERROCHELATASE, MITOCHONDRIAL"/>
    <property type="match status" value="1"/>
</dbReference>
<dbReference type="Pfam" id="PF00762">
    <property type="entry name" value="Ferrochelatase"/>
    <property type="match status" value="1"/>
</dbReference>
<dbReference type="SUPFAM" id="SSF53800">
    <property type="entry name" value="Chelatase"/>
    <property type="match status" value="1"/>
</dbReference>
<dbReference type="PROSITE" id="PS00534">
    <property type="entry name" value="FERROCHELATASE"/>
    <property type="match status" value="1"/>
</dbReference>
<sequence length="365" mass="40386">MARYWPEPAHTHGTPERTGILLVNLGTPAAPTAAAVRPYLKEFLSDPRVVEIPRAIWWPILNGVILNLRPKKSAEKYAAIWSDAGSPLKVHTERQAKLLAGYLGHAGVTSVVVDWAMRYGAPSISDILGRMKAEGCSRILVVPLYPQYAASTTASVIDEVAGCLTRWRNLPEIRYVRNFHDHPGYVGALARSVRDHWAKHGEPDQLVMSFHGIPKRSLDLGDPYHCECHVTARLLAAKLDLPPERWQLTFQSRFGKAEWLKPYTQPTLEALGRKGTGRVDVICPGFASDCLETLEEIALECRTAFLGAGGKAFHYIPCLNERHDWIAALTDIVRSRIGDWLEAPVPAAELLAATAQRARTAGAER</sequence>
<protein>
    <recommendedName>
        <fullName evidence="1">Ferrochelatase</fullName>
        <ecNumber evidence="1">4.98.1.1</ecNumber>
    </recommendedName>
    <alternativeName>
        <fullName evidence="1">Heme synthase</fullName>
    </alternativeName>
    <alternativeName>
        <fullName evidence="1">Protoheme ferro-lyase</fullName>
    </alternativeName>
</protein>
<proteinExistence type="inferred from homology"/>
<evidence type="ECO:0000255" key="1">
    <source>
        <dbReference type="HAMAP-Rule" id="MF_00323"/>
    </source>
</evidence>
<comment type="function">
    <text evidence="1">Catalyzes the ferrous insertion into protoporphyrin IX.</text>
</comment>
<comment type="catalytic activity">
    <reaction evidence="1">
        <text>heme b + 2 H(+) = protoporphyrin IX + Fe(2+)</text>
        <dbReference type="Rhea" id="RHEA:22584"/>
        <dbReference type="ChEBI" id="CHEBI:15378"/>
        <dbReference type="ChEBI" id="CHEBI:29033"/>
        <dbReference type="ChEBI" id="CHEBI:57306"/>
        <dbReference type="ChEBI" id="CHEBI:60344"/>
        <dbReference type="EC" id="4.98.1.1"/>
    </reaction>
</comment>
<comment type="pathway">
    <text evidence="1">Porphyrin-containing compound metabolism; protoheme biosynthesis; protoheme from protoporphyrin-IX: step 1/1.</text>
</comment>
<comment type="subcellular location">
    <subcellularLocation>
        <location evidence="1">Cytoplasm</location>
    </subcellularLocation>
</comment>
<comment type="similarity">
    <text evidence="1">Belongs to the ferrochelatase family.</text>
</comment>
<keyword id="KW-0963">Cytoplasm</keyword>
<keyword id="KW-0350">Heme biosynthesis</keyword>
<keyword id="KW-0408">Iron</keyword>
<keyword id="KW-0456">Lyase</keyword>
<keyword id="KW-0479">Metal-binding</keyword>
<keyword id="KW-0627">Porphyrin biosynthesis</keyword>
<keyword id="KW-1185">Reference proteome</keyword>
<feature type="chain" id="PRO_1000079191" description="Ferrochelatase">
    <location>
        <begin position="1"/>
        <end position="365"/>
    </location>
</feature>
<feature type="binding site" evidence="1">
    <location>
        <position position="211"/>
    </location>
    <ligand>
        <name>Fe cation</name>
        <dbReference type="ChEBI" id="CHEBI:24875"/>
    </ligand>
</feature>
<feature type="binding site" evidence="1">
    <location>
        <position position="292"/>
    </location>
    <ligand>
        <name>Fe cation</name>
        <dbReference type="ChEBI" id="CHEBI:24875"/>
    </ligand>
</feature>
<reference key="1">
    <citation type="journal article" date="2005" name="Arch. Microbiol.">
        <title>The genome sequence of an anaerobic aromatic-degrading denitrifying bacterium, strain EbN1.</title>
        <authorList>
            <person name="Rabus R."/>
            <person name="Kube M."/>
            <person name="Heider J."/>
            <person name="Beck A."/>
            <person name="Heitmann K."/>
            <person name="Widdel F."/>
            <person name="Reinhardt R."/>
        </authorList>
    </citation>
    <scope>NUCLEOTIDE SEQUENCE [LARGE SCALE GENOMIC DNA]</scope>
    <source>
        <strain>DSM 19018 / LMG 30748 / EbN1</strain>
    </source>
</reference>
<accession>Q5P1H1</accession>
<gene>
    <name evidence="1" type="primary">hemH</name>
    <name type="ordered locus">AZOSEA27180</name>
    <name type="ORF">ebA4802</name>
</gene>
<organism>
    <name type="scientific">Aromatoleum aromaticum (strain DSM 19018 / LMG 30748 / EbN1)</name>
    <name type="common">Azoarcus sp. (strain EbN1)</name>
    <dbReference type="NCBI Taxonomy" id="76114"/>
    <lineage>
        <taxon>Bacteria</taxon>
        <taxon>Pseudomonadati</taxon>
        <taxon>Pseudomonadota</taxon>
        <taxon>Betaproteobacteria</taxon>
        <taxon>Rhodocyclales</taxon>
        <taxon>Rhodocyclaceae</taxon>
        <taxon>Aromatoleum</taxon>
    </lineage>
</organism>